<dbReference type="EMBL" id="AE005174">
    <property type="protein sequence ID" value="AAG59291.1"/>
    <property type="molecule type" value="Genomic_DNA"/>
</dbReference>
<dbReference type="EMBL" id="BA000007">
    <property type="status" value="NOT_ANNOTATED_CDS"/>
    <property type="molecule type" value="Genomic_DNA"/>
</dbReference>
<dbReference type="PIR" id="G86103">
    <property type="entry name" value="G86103"/>
</dbReference>
<dbReference type="RefSeq" id="WP_000820639.1">
    <property type="nucleotide sequence ID" value="NZ_VOAI01000008.1"/>
</dbReference>
<dbReference type="SMR" id="Q8X3J8"/>
<dbReference type="STRING" id="155864.Z5694"/>
<dbReference type="KEGG" id="ece:Z5694"/>
<dbReference type="PATRIC" id="fig|83334.175.peg.5628"/>
<dbReference type="eggNOG" id="ENOG5031VYC">
    <property type="taxonomic scope" value="Bacteria"/>
</dbReference>
<dbReference type="OMA" id="WQREVND"/>
<dbReference type="Proteomes" id="UP000000558">
    <property type="component" value="Chromosome"/>
</dbReference>
<dbReference type="Proteomes" id="UP000002519">
    <property type="component" value="Chromosome"/>
</dbReference>
<dbReference type="InterPro" id="IPR048164">
    <property type="entry name" value="YjdP-like"/>
</dbReference>
<dbReference type="NCBIfam" id="NF041443">
    <property type="entry name" value="DDRRRQL_YjdP"/>
    <property type="match status" value="1"/>
</dbReference>
<accession>Q8X3J8</accession>
<sequence length="109" mass="13326">MKRHSTLFLFTLLTLTTVPAQADIIDDTIGNIQQAINDASNPDRGRDYEDSRDDGWQREVSDDRRRQYDDRRRQFEDRRRQLDDRQHQLNQERRQLEDEERRMEDEYGQ</sequence>
<reference key="1">
    <citation type="journal article" date="2001" name="Nature">
        <title>Genome sequence of enterohaemorrhagic Escherichia coli O157:H7.</title>
        <authorList>
            <person name="Perna N.T."/>
            <person name="Plunkett G. III"/>
            <person name="Burland V."/>
            <person name="Mau B."/>
            <person name="Glasner J.D."/>
            <person name="Rose D.J."/>
            <person name="Mayhew G.F."/>
            <person name="Evans P.S."/>
            <person name="Gregor J."/>
            <person name="Kirkpatrick H.A."/>
            <person name="Posfai G."/>
            <person name="Hackett J."/>
            <person name="Klink S."/>
            <person name="Boutin A."/>
            <person name="Shao Y."/>
            <person name="Miller L."/>
            <person name="Grotbeck E.J."/>
            <person name="Davis N.W."/>
            <person name="Lim A."/>
            <person name="Dimalanta E.T."/>
            <person name="Potamousis K."/>
            <person name="Apodaca J."/>
            <person name="Anantharaman T.S."/>
            <person name="Lin J."/>
            <person name="Yen G."/>
            <person name="Schwartz D.C."/>
            <person name="Welch R.A."/>
            <person name="Blattner F.R."/>
        </authorList>
    </citation>
    <scope>NUCLEOTIDE SEQUENCE [LARGE SCALE GENOMIC DNA]</scope>
    <source>
        <strain>O157:H7 / EDL933 / ATCC 700927 / EHEC</strain>
    </source>
</reference>
<reference key="2">
    <citation type="journal article" date="2001" name="DNA Res.">
        <title>Complete genome sequence of enterohemorrhagic Escherichia coli O157:H7 and genomic comparison with a laboratory strain K-12.</title>
        <authorList>
            <person name="Hayashi T."/>
            <person name="Makino K."/>
            <person name="Ohnishi M."/>
            <person name="Kurokawa K."/>
            <person name="Ishii K."/>
            <person name="Yokoyama K."/>
            <person name="Han C.-G."/>
            <person name="Ohtsubo E."/>
            <person name="Nakayama K."/>
            <person name="Murata T."/>
            <person name="Tanaka M."/>
            <person name="Tobe T."/>
            <person name="Iida T."/>
            <person name="Takami H."/>
            <person name="Honda T."/>
            <person name="Sasakawa C."/>
            <person name="Ogasawara N."/>
            <person name="Yasunaga T."/>
            <person name="Kuhara S."/>
            <person name="Shiba T."/>
            <person name="Hattori M."/>
            <person name="Shinagawa H."/>
        </authorList>
    </citation>
    <scope>NUCLEOTIDE SEQUENCE [LARGE SCALE GENOMIC DNA]</scope>
    <source>
        <strain>O157:H7 / Sakai / RIMD 0509952 / EHEC</strain>
    </source>
</reference>
<organism>
    <name type="scientific">Escherichia coli O157:H7</name>
    <dbReference type="NCBI Taxonomy" id="83334"/>
    <lineage>
        <taxon>Bacteria</taxon>
        <taxon>Pseudomonadati</taxon>
        <taxon>Pseudomonadota</taxon>
        <taxon>Gammaproteobacteria</taxon>
        <taxon>Enterobacterales</taxon>
        <taxon>Enterobacteriaceae</taxon>
        <taxon>Escherichia</taxon>
    </lineage>
</organism>
<proteinExistence type="inferred from homology"/>
<name>YJDP_ECO57</name>
<keyword id="KW-1185">Reference proteome</keyword>
<keyword id="KW-0732">Signal</keyword>
<evidence type="ECO:0000255" key="1"/>
<evidence type="ECO:0000256" key="2">
    <source>
        <dbReference type="SAM" id="MobiDB-lite"/>
    </source>
</evidence>
<protein>
    <recommendedName>
        <fullName>Uncharacterized protein YjdP</fullName>
    </recommendedName>
</protein>
<gene>
    <name type="primary">yjdP</name>
    <name type="ordered locus">Z5694</name>
    <name type="ordered locus">ECs5074.1</name>
</gene>
<feature type="signal peptide" evidence="1">
    <location>
        <begin position="1"/>
        <end position="22"/>
    </location>
</feature>
<feature type="chain" id="PRO_0000228849" description="Uncharacterized protein YjdP">
    <location>
        <begin position="23"/>
        <end position="109"/>
    </location>
</feature>
<feature type="region of interest" description="Disordered" evidence="2">
    <location>
        <begin position="36"/>
        <end position="109"/>
    </location>
</feature>
<feature type="compositionally biased region" description="Basic and acidic residues" evidence="2">
    <location>
        <begin position="41"/>
        <end position="109"/>
    </location>
</feature>